<keyword id="KW-0028">Amino-acid biosynthesis</keyword>
<keyword id="KW-0057">Aromatic amino acid biosynthesis</keyword>
<keyword id="KW-0520">NAD</keyword>
<keyword id="KW-0521">NADP</keyword>
<keyword id="KW-0560">Oxidoreductase</keyword>
<accession>Q1RBA4</accession>
<organism>
    <name type="scientific">Escherichia coli (strain UTI89 / UPEC)</name>
    <dbReference type="NCBI Taxonomy" id="364106"/>
    <lineage>
        <taxon>Bacteria</taxon>
        <taxon>Pseudomonadati</taxon>
        <taxon>Pseudomonadota</taxon>
        <taxon>Gammaproteobacteria</taxon>
        <taxon>Enterobacterales</taxon>
        <taxon>Enterobacteriaceae</taxon>
        <taxon>Escherichia</taxon>
    </lineage>
</organism>
<evidence type="ECO:0000255" key="1">
    <source>
        <dbReference type="HAMAP-Rule" id="MF_01578"/>
    </source>
</evidence>
<sequence length="288" mass="31242">MDVTAKYELIGLMAYPIRHSLSPEMQNKALEKAGLPFTYMAFEVDNDSFPAAIEGLKALKMRGTGVSMPNKQLACEYVDELTPAAKLVGAINTIVNDDGYLRGYNTDGTGHIRAIKESGFDIKGKTMVLLGAGGASTAIGAQGAIEGLKEIKLFNRRDEFFDKALAFAQRVNENTDCVVTVTDLADQQAFAEALASADILTNGTKVGMKPLENESLVNDISLLHPGLLVTECVYNPHMTKLLQQAQQAGCKTIDGYGMLLWQGAEQFTLWTGKDFPLEYVKQVMGFGA</sequence>
<dbReference type="EC" id="1.1.1.282" evidence="1"/>
<dbReference type="EMBL" id="CP000243">
    <property type="protein sequence ID" value="ABE07360.1"/>
    <property type="molecule type" value="Genomic_DNA"/>
</dbReference>
<dbReference type="RefSeq" id="WP_000383457.1">
    <property type="nucleotide sequence ID" value="NZ_CP064825.1"/>
</dbReference>
<dbReference type="SMR" id="Q1RBA4"/>
<dbReference type="KEGG" id="eci:UTI89_C1884"/>
<dbReference type="HOGENOM" id="CLU_044063_4_4_6"/>
<dbReference type="UniPathway" id="UPA00053">
    <property type="reaction ID" value="UER00087"/>
</dbReference>
<dbReference type="Proteomes" id="UP000001952">
    <property type="component" value="Chromosome"/>
</dbReference>
<dbReference type="GO" id="GO:0030266">
    <property type="term" value="F:quinate 3-dehydrogenase (NAD+) activity"/>
    <property type="evidence" value="ECO:0007669"/>
    <property type="project" value="UniProtKB-UniRule"/>
</dbReference>
<dbReference type="GO" id="GO:0052733">
    <property type="term" value="F:quinate 3-dehydrogenase (NADP+) activity"/>
    <property type="evidence" value="ECO:0007669"/>
    <property type="project" value="InterPro"/>
</dbReference>
<dbReference type="GO" id="GO:0052734">
    <property type="term" value="F:shikimate 3-dehydrogenase (NAD+) activity"/>
    <property type="evidence" value="ECO:0007669"/>
    <property type="project" value="InterPro"/>
</dbReference>
<dbReference type="GO" id="GO:0004764">
    <property type="term" value="F:shikimate 3-dehydrogenase (NADP+) activity"/>
    <property type="evidence" value="ECO:0007669"/>
    <property type="project" value="UniProtKB-UniRule"/>
</dbReference>
<dbReference type="GO" id="GO:0008652">
    <property type="term" value="P:amino acid biosynthetic process"/>
    <property type="evidence" value="ECO:0007669"/>
    <property type="project" value="UniProtKB-KW"/>
</dbReference>
<dbReference type="GO" id="GO:0009073">
    <property type="term" value="P:aromatic amino acid family biosynthetic process"/>
    <property type="evidence" value="ECO:0007669"/>
    <property type="project" value="UniProtKB-KW"/>
</dbReference>
<dbReference type="GO" id="GO:0009423">
    <property type="term" value="P:chorismate biosynthetic process"/>
    <property type="evidence" value="ECO:0007669"/>
    <property type="project" value="UniProtKB-UniRule"/>
</dbReference>
<dbReference type="GO" id="GO:0019632">
    <property type="term" value="P:shikimate metabolic process"/>
    <property type="evidence" value="ECO:0007669"/>
    <property type="project" value="TreeGrafter"/>
</dbReference>
<dbReference type="CDD" id="cd01065">
    <property type="entry name" value="NAD_bind_Shikimate_DH"/>
    <property type="match status" value="1"/>
</dbReference>
<dbReference type="FunFam" id="3.40.50.10860:FF:000004">
    <property type="entry name" value="Quinate/shikimate dehydrogenase"/>
    <property type="match status" value="1"/>
</dbReference>
<dbReference type="FunFam" id="3.40.50.720:FF:000086">
    <property type="entry name" value="Quinate/shikimate dehydrogenase"/>
    <property type="match status" value="1"/>
</dbReference>
<dbReference type="Gene3D" id="3.40.50.10860">
    <property type="entry name" value="Leucine Dehydrogenase, chain A, domain 1"/>
    <property type="match status" value="1"/>
</dbReference>
<dbReference type="Gene3D" id="3.40.50.720">
    <property type="entry name" value="NAD(P)-binding Rossmann-like Domain"/>
    <property type="match status" value="1"/>
</dbReference>
<dbReference type="HAMAP" id="MF_00222">
    <property type="entry name" value="Shikimate_DH_AroE"/>
    <property type="match status" value="1"/>
</dbReference>
<dbReference type="HAMAP" id="MF_01578">
    <property type="entry name" value="Shikimate_DH_YdiB"/>
    <property type="match status" value="1"/>
</dbReference>
<dbReference type="InterPro" id="IPR046346">
    <property type="entry name" value="Aminoacid_DH-like_N_sf"/>
</dbReference>
<dbReference type="InterPro" id="IPR036291">
    <property type="entry name" value="NAD(P)-bd_dom_sf"/>
</dbReference>
<dbReference type="InterPro" id="IPR022872">
    <property type="entry name" value="Quinate/Shikimate_DH"/>
</dbReference>
<dbReference type="InterPro" id="IPR041121">
    <property type="entry name" value="SDH_C"/>
</dbReference>
<dbReference type="InterPro" id="IPR013708">
    <property type="entry name" value="Shikimate_DH-bd_N"/>
</dbReference>
<dbReference type="InterPro" id="IPR022893">
    <property type="entry name" value="Shikimate_DH_fam"/>
</dbReference>
<dbReference type="NCBIfam" id="NF009390">
    <property type="entry name" value="PRK12749.1"/>
    <property type="match status" value="1"/>
</dbReference>
<dbReference type="PANTHER" id="PTHR21089:SF1">
    <property type="entry name" value="BIFUNCTIONAL 3-DEHYDROQUINATE DEHYDRATASE_SHIKIMATE DEHYDROGENASE, CHLOROPLASTIC"/>
    <property type="match status" value="1"/>
</dbReference>
<dbReference type="PANTHER" id="PTHR21089">
    <property type="entry name" value="SHIKIMATE DEHYDROGENASE"/>
    <property type="match status" value="1"/>
</dbReference>
<dbReference type="Pfam" id="PF18317">
    <property type="entry name" value="SDH_C"/>
    <property type="match status" value="1"/>
</dbReference>
<dbReference type="Pfam" id="PF08501">
    <property type="entry name" value="Shikimate_dh_N"/>
    <property type="match status" value="1"/>
</dbReference>
<dbReference type="SUPFAM" id="SSF53223">
    <property type="entry name" value="Aminoacid dehydrogenase-like, N-terminal domain"/>
    <property type="match status" value="1"/>
</dbReference>
<dbReference type="SUPFAM" id="SSF51735">
    <property type="entry name" value="NAD(P)-binding Rossmann-fold domains"/>
    <property type="match status" value="1"/>
</dbReference>
<protein>
    <recommendedName>
        <fullName evidence="1">Quinate/shikimate dehydrogenase</fullName>
        <ecNumber evidence="1">1.1.1.282</ecNumber>
    </recommendedName>
    <alternativeName>
        <fullName evidence="1">NAD-dependent shikimate 5-dehydrogenase</fullName>
    </alternativeName>
</protein>
<name>YDIB_ECOUT</name>
<gene>
    <name evidence="1" type="primary">ydiB</name>
    <name type="ordered locus">UTI89_C1884</name>
</gene>
<proteinExistence type="inferred from homology"/>
<reference key="1">
    <citation type="journal article" date="2006" name="Proc. Natl. Acad. Sci. U.S.A.">
        <title>Identification of genes subject to positive selection in uropathogenic strains of Escherichia coli: a comparative genomics approach.</title>
        <authorList>
            <person name="Chen S.L."/>
            <person name="Hung C.-S."/>
            <person name="Xu J."/>
            <person name="Reigstad C.S."/>
            <person name="Magrini V."/>
            <person name="Sabo A."/>
            <person name="Blasiar D."/>
            <person name="Bieri T."/>
            <person name="Meyer R.R."/>
            <person name="Ozersky P."/>
            <person name="Armstrong J.R."/>
            <person name="Fulton R.S."/>
            <person name="Latreille J.P."/>
            <person name="Spieth J."/>
            <person name="Hooton T.M."/>
            <person name="Mardis E.R."/>
            <person name="Hultgren S.J."/>
            <person name="Gordon J.I."/>
        </authorList>
    </citation>
    <scope>NUCLEOTIDE SEQUENCE [LARGE SCALE GENOMIC DNA]</scope>
    <source>
        <strain>UTI89 / UPEC</strain>
    </source>
</reference>
<feature type="chain" id="PRO_0000280771" description="Quinate/shikimate dehydrogenase">
    <location>
        <begin position="1"/>
        <end position="288"/>
    </location>
</feature>
<feature type="binding site" evidence="1">
    <location>
        <position position="71"/>
    </location>
    <ligand>
        <name>substrate</name>
    </ligand>
</feature>
<feature type="binding site" evidence="1">
    <location>
        <position position="107"/>
    </location>
    <ligand>
        <name>substrate</name>
    </ligand>
</feature>
<feature type="binding site" evidence="1">
    <location>
        <begin position="132"/>
        <end position="135"/>
    </location>
    <ligand>
        <name>NAD(+)</name>
        <dbReference type="ChEBI" id="CHEBI:57540"/>
    </ligand>
</feature>
<feature type="binding site" evidence="1">
    <location>
        <begin position="155"/>
        <end position="158"/>
    </location>
    <ligand>
        <name>NAD(+)</name>
        <dbReference type="ChEBI" id="CHEBI:57540"/>
    </ligand>
</feature>
<feature type="binding site" evidence="1">
    <location>
        <position position="205"/>
    </location>
    <ligand>
        <name>NAD(+)</name>
        <dbReference type="ChEBI" id="CHEBI:57540"/>
    </ligand>
</feature>
<feature type="binding site" evidence="1">
    <location>
        <begin position="232"/>
        <end position="235"/>
    </location>
    <ligand>
        <name>NAD(+)</name>
        <dbReference type="ChEBI" id="CHEBI:57540"/>
    </ligand>
</feature>
<feature type="binding site" evidence="1">
    <location>
        <position position="255"/>
    </location>
    <ligand>
        <name>NAD(+)</name>
        <dbReference type="ChEBI" id="CHEBI:57540"/>
    </ligand>
</feature>
<comment type="function">
    <text evidence="1">The actual biological function of YdiB remains unclear, nor is it known whether 3-dehydroshikimate or quinate represents the natural substrate. Catalyzes the reversible NAD-dependent reduction of both 3-dehydroshikimate (DHSA) and 3-dehydroquinate to yield shikimate (SA) and quinate, respectively. It can use both NAD or NADP for catalysis, however it has higher catalytic efficiency with NAD.</text>
</comment>
<comment type="catalytic activity">
    <reaction evidence="1">
        <text>L-quinate + NAD(+) = 3-dehydroquinate + NADH + H(+)</text>
        <dbReference type="Rhea" id="RHEA:22364"/>
        <dbReference type="ChEBI" id="CHEBI:15378"/>
        <dbReference type="ChEBI" id="CHEBI:29751"/>
        <dbReference type="ChEBI" id="CHEBI:32364"/>
        <dbReference type="ChEBI" id="CHEBI:57540"/>
        <dbReference type="ChEBI" id="CHEBI:57945"/>
        <dbReference type="EC" id="1.1.1.282"/>
    </reaction>
</comment>
<comment type="catalytic activity">
    <reaction evidence="1">
        <text>L-quinate + NADP(+) = 3-dehydroquinate + NADPH + H(+)</text>
        <dbReference type="Rhea" id="RHEA:18425"/>
        <dbReference type="ChEBI" id="CHEBI:15378"/>
        <dbReference type="ChEBI" id="CHEBI:29751"/>
        <dbReference type="ChEBI" id="CHEBI:32364"/>
        <dbReference type="ChEBI" id="CHEBI:57783"/>
        <dbReference type="ChEBI" id="CHEBI:58349"/>
        <dbReference type="EC" id="1.1.1.282"/>
    </reaction>
</comment>
<comment type="catalytic activity">
    <reaction evidence="1">
        <text>shikimate + NADP(+) = 3-dehydroshikimate + NADPH + H(+)</text>
        <dbReference type="Rhea" id="RHEA:17737"/>
        <dbReference type="ChEBI" id="CHEBI:15378"/>
        <dbReference type="ChEBI" id="CHEBI:16630"/>
        <dbReference type="ChEBI" id="CHEBI:36208"/>
        <dbReference type="ChEBI" id="CHEBI:57783"/>
        <dbReference type="ChEBI" id="CHEBI:58349"/>
        <dbReference type="EC" id="1.1.1.282"/>
    </reaction>
</comment>
<comment type="catalytic activity">
    <reaction evidence="1">
        <text>shikimate + NAD(+) = 3-dehydroshikimate + NADH + H(+)</text>
        <dbReference type="Rhea" id="RHEA:17741"/>
        <dbReference type="ChEBI" id="CHEBI:15378"/>
        <dbReference type="ChEBI" id="CHEBI:16630"/>
        <dbReference type="ChEBI" id="CHEBI:36208"/>
        <dbReference type="ChEBI" id="CHEBI:57540"/>
        <dbReference type="ChEBI" id="CHEBI:57945"/>
        <dbReference type="EC" id="1.1.1.282"/>
    </reaction>
</comment>
<comment type="pathway">
    <text evidence="1">Metabolic intermediate biosynthesis; chorismate biosynthesis; chorismate from D-erythrose 4-phosphate and phosphoenolpyruvate: step 4/7.</text>
</comment>
<comment type="subunit">
    <text evidence="1">Homodimer.</text>
</comment>
<comment type="similarity">
    <text evidence="1">Belongs to the shikimate dehydrogenase family.</text>
</comment>